<protein>
    <recommendedName>
        <fullName evidence="1">Cobalt-precorrin-5B C(1)-methyltransferase</fullName>
        <ecNumber evidence="1">2.1.1.195</ecNumber>
    </recommendedName>
    <alternativeName>
        <fullName evidence="1">Cobalt-precorrin-6A synthase</fullName>
    </alternativeName>
</protein>
<gene>
    <name evidence="1" type="primary">cbiD</name>
    <name type="ordered locus">Bcep18194_A4827</name>
</gene>
<sequence length="362" mass="37426">MRDETPEQPAPLRFGYTTGSCATATSLAAARLLLAGSADDAVEIVLPKGQRVMMRLEFCRATADGAEAATIKDAGDDPDVTHGALIFARVALASAPGVRFHAGPGVGTVTRAGLTLPVGEPAINPVPRQMMTTHLEALAAEHGYAGGFDVTIGVEGGEALALKTMNPRLGIVGGLSILGTTGIVRPFSCSAYIASIHQGIDVARANGIAHIAACTGNASEDAMRAHYQLPDMALIEMGDFAGAVLKHLRRAPVARLSMCGGFGKLSKLAAGHLDLHSRHSSIDLPLLAQWAAEAGASDALQAAMRAANTSQEALKLAHADGVPLGDLVCAQALRVARDIVPPSVAVEIFAIDRQGRFVGEAR</sequence>
<proteinExistence type="inferred from homology"/>
<accession>Q39GJ4</accession>
<comment type="function">
    <text evidence="1">Catalyzes the methylation of C-1 in cobalt-precorrin-5B to form cobalt-precorrin-6A.</text>
</comment>
<comment type="catalytic activity">
    <reaction evidence="1">
        <text>Co-precorrin-5B + S-adenosyl-L-methionine = Co-precorrin-6A + S-adenosyl-L-homocysteine</text>
        <dbReference type="Rhea" id="RHEA:26285"/>
        <dbReference type="ChEBI" id="CHEBI:57856"/>
        <dbReference type="ChEBI" id="CHEBI:59789"/>
        <dbReference type="ChEBI" id="CHEBI:60063"/>
        <dbReference type="ChEBI" id="CHEBI:60064"/>
        <dbReference type="EC" id="2.1.1.195"/>
    </reaction>
</comment>
<comment type="pathway">
    <text evidence="1">Cofactor biosynthesis; adenosylcobalamin biosynthesis; cob(II)yrinate a,c-diamide from sirohydrochlorin (anaerobic route): step 6/10.</text>
</comment>
<comment type="similarity">
    <text evidence="1">Belongs to the CbiD family.</text>
</comment>
<name>CBID_BURL3</name>
<evidence type="ECO:0000255" key="1">
    <source>
        <dbReference type="HAMAP-Rule" id="MF_00787"/>
    </source>
</evidence>
<feature type="chain" id="PRO_0000257753" description="Cobalt-precorrin-5B C(1)-methyltransferase">
    <location>
        <begin position="1"/>
        <end position="362"/>
    </location>
</feature>
<reference key="1">
    <citation type="submission" date="2005-10" db="EMBL/GenBank/DDBJ databases">
        <title>Complete sequence of chromosome 1 of Burkholderia sp. 383.</title>
        <authorList>
            <consortium name="US DOE Joint Genome Institute"/>
            <person name="Copeland A."/>
            <person name="Lucas S."/>
            <person name="Lapidus A."/>
            <person name="Barry K."/>
            <person name="Detter J.C."/>
            <person name="Glavina T."/>
            <person name="Hammon N."/>
            <person name="Israni S."/>
            <person name="Pitluck S."/>
            <person name="Chain P."/>
            <person name="Malfatti S."/>
            <person name="Shin M."/>
            <person name="Vergez L."/>
            <person name="Schmutz J."/>
            <person name="Larimer F."/>
            <person name="Land M."/>
            <person name="Kyrpides N."/>
            <person name="Lykidis A."/>
            <person name="Richardson P."/>
        </authorList>
    </citation>
    <scope>NUCLEOTIDE SEQUENCE [LARGE SCALE GENOMIC DNA]</scope>
    <source>
        <strain>ATCC 17760 / DSM 23089 / LMG 22485 / NCIMB 9086 / R18194 / 383</strain>
    </source>
</reference>
<dbReference type="EC" id="2.1.1.195" evidence="1"/>
<dbReference type="EMBL" id="CP000151">
    <property type="protein sequence ID" value="ABB08422.1"/>
    <property type="molecule type" value="Genomic_DNA"/>
</dbReference>
<dbReference type="RefSeq" id="WP_011351981.1">
    <property type="nucleotide sequence ID" value="NC_007510.1"/>
</dbReference>
<dbReference type="SMR" id="Q39GJ4"/>
<dbReference type="GeneID" id="45094725"/>
<dbReference type="KEGG" id="bur:Bcep18194_A4827"/>
<dbReference type="PATRIC" id="fig|482957.22.peg.1749"/>
<dbReference type="HOGENOM" id="CLU_041273_0_0_4"/>
<dbReference type="UniPathway" id="UPA00148">
    <property type="reaction ID" value="UER00227"/>
</dbReference>
<dbReference type="Proteomes" id="UP000002705">
    <property type="component" value="Chromosome 1"/>
</dbReference>
<dbReference type="GO" id="GO:0043780">
    <property type="term" value="F:cobalt-precorrin-5B C1-methyltransferase activity"/>
    <property type="evidence" value="ECO:0007669"/>
    <property type="project" value="RHEA"/>
</dbReference>
<dbReference type="GO" id="GO:0019251">
    <property type="term" value="P:anaerobic cobalamin biosynthetic process"/>
    <property type="evidence" value="ECO:0007669"/>
    <property type="project" value="UniProtKB-UniRule"/>
</dbReference>
<dbReference type="GO" id="GO:0032259">
    <property type="term" value="P:methylation"/>
    <property type="evidence" value="ECO:0007669"/>
    <property type="project" value="UniProtKB-KW"/>
</dbReference>
<dbReference type="Gene3D" id="3.30.2110.10">
    <property type="entry name" value="CbiD-like"/>
    <property type="match status" value="1"/>
</dbReference>
<dbReference type="HAMAP" id="MF_00787">
    <property type="entry name" value="CbiD"/>
    <property type="match status" value="1"/>
</dbReference>
<dbReference type="InterPro" id="IPR002748">
    <property type="entry name" value="CbiD"/>
</dbReference>
<dbReference type="InterPro" id="IPR036074">
    <property type="entry name" value="CbiD_sf"/>
</dbReference>
<dbReference type="NCBIfam" id="TIGR00312">
    <property type="entry name" value="cbiD"/>
    <property type="match status" value="1"/>
</dbReference>
<dbReference type="NCBIfam" id="NF000849">
    <property type="entry name" value="PRK00075.1-1"/>
    <property type="match status" value="1"/>
</dbReference>
<dbReference type="PANTHER" id="PTHR35863">
    <property type="entry name" value="COBALT-PRECORRIN-5B C(1)-METHYLTRANSFERASE"/>
    <property type="match status" value="1"/>
</dbReference>
<dbReference type="PANTHER" id="PTHR35863:SF1">
    <property type="entry name" value="COBALT-PRECORRIN-5B C(1)-METHYLTRANSFERASE"/>
    <property type="match status" value="1"/>
</dbReference>
<dbReference type="Pfam" id="PF01888">
    <property type="entry name" value="CbiD"/>
    <property type="match status" value="1"/>
</dbReference>
<dbReference type="PIRSF" id="PIRSF026782">
    <property type="entry name" value="CbiD"/>
    <property type="match status" value="1"/>
</dbReference>
<dbReference type="SUPFAM" id="SSF111342">
    <property type="entry name" value="CbiD-like"/>
    <property type="match status" value="1"/>
</dbReference>
<keyword id="KW-0169">Cobalamin biosynthesis</keyword>
<keyword id="KW-0489">Methyltransferase</keyword>
<keyword id="KW-0949">S-adenosyl-L-methionine</keyword>
<keyword id="KW-0808">Transferase</keyword>
<organism>
    <name type="scientific">Burkholderia lata (strain ATCC 17760 / DSM 23089 / LMG 22485 / NCIMB 9086 / R18194 / 383)</name>
    <dbReference type="NCBI Taxonomy" id="482957"/>
    <lineage>
        <taxon>Bacteria</taxon>
        <taxon>Pseudomonadati</taxon>
        <taxon>Pseudomonadota</taxon>
        <taxon>Betaproteobacteria</taxon>
        <taxon>Burkholderiales</taxon>
        <taxon>Burkholderiaceae</taxon>
        <taxon>Burkholderia</taxon>
        <taxon>Burkholderia cepacia complex</taxon>
    </lineage>
</organism>